<evidence type="ECO:0000255" key="1">
    <source>
        <dbReference type="HAMAP-Rule" id="MF_04069"/>
    </source>
</evidence>
<organismHost>
    <name type="scientific">Aves</name>
    <dbReference type="NCBI Taxonomy" id="8782"/>
</organismHost>
<organismHost>
    <name type="scientific">Homo sapiens</name>
    <name type="common">Human</name>
    <dbReference type="NCBI Taxonomy" id="9606"/>
</organismHost>
<organismHost>
    <name type="scientific">Sus scrofa</name>
    <name type="common">Pig</name>
    <dbReference type="NCBI Taxonomy" id="9823"/>
</organismHost>
<name>M2_I88A7</name>
<feature type="chain" id="PRO_0000326388" description="Matrix protein 2">
    <location>
        <begin position="1"/>
        <end position="97"/>
    </location>
</feature>
<feature type="topological domain" description="Virion surface" evidence="1">
    <location>
        <begin position="1"/>
        <end position="22"/>
    </location>
</feature>
<feature type="transmembrane region" description="Helical; Signal-anchor for type III membrane protein" evidence="1">
    <location>
        <begin position="23"/>
        <end position="43"/>
    </location>
</feature>
<feature type="topological domain" description="Intravirion" evidence="1">
    <location>
        <begin position="44"/>
        <end position="97"/>
    </location>
</feature>
<feature type="site" description="Essential for channel activity, possibly by being protonated during channel activation, and by forming the channel gate and the selective filter" evidence="1">
    <location>
        <position position="37"/>
    </location>
</feature>
<feature type="site" description="Seems to be involved in pH gating" evidence="1">
    <location>
        <position position="41"/>
    </location>
</feature>
<feature type="modified residue" description="Phosphoserine; by host" evidence="1">
    <location>
        <position position="64"/>
    </location>
</feature>
<feature type="modified residue" description="Phosphoserine; by host" evidence="1">
    <location>
        <position position="82"/>
    </location>
</feature>
<feature type="lipid moiety-binding region" description="S-palmitoyl cysteine; by host" evidence="1">
    <location>
        <position position="50"/>
    </location>
</feature>
<feature type="glycosylation site" description="N-linked (GlcNAc...) asparagine; by host" evidence="1">
    <location>
        <position position="20"/>
    </location>
</feature>
<feature type="disulfide bond" description="Interchain (with C-17)" evidence="1">
    <location>
        <position position="17"/>
    </location>
</feature>
<feature type="disulfide bond" description="Interchain (with C-19)" evidence="1">
    <location>
        <position position="19"/>
    </location>
</feature>
<keyword id="KW-0025">Alternative splicing</keyword>
<keyword id="KW-1015">Disulfide bond</keyword>
<keyword id="KW-0325">Glycoprotein</keyword>
<keyword id="KW-1032">Host cell membrane</keyword>
<keyword id="KW-1043">Host membrane</keyword>
<keyword id="KW-0945">Host-virus interaction</keyword>
<keyword id="KW-0375">Hydrogen ion transport</keyword>
<keyword id="KW-1083">Inhibition of host autophagy by virus</keyword>
<keyword id="KW-0407">Ion channel</keyword>
<keyword id="KW-0406">Ion transport</keyword>
<keyword id="KW-0449">Lipoprotein</keyword>
<keyword id="KW-0472">Membrane</keyword>
<keyword id="KW-0564">Palmitate</keyword>
<keyword id="KW-0597">Phosphoprotein</keyword>
<keyword id="KW-0735">Signal-anchor</keyword>
<keyword id="KW-0812">Transmembrane</keyword>
<keyword id="KW-1133">Transmembrane helix</keyword>
<keyword id="KW-0813">Transport</keyword>
<keyword id="KW-1182">Viral ion channel</keyword>
<keyword id="KW-0946">Virion</keyword>
<proteinExistence type="inferred from homology"/>
<reference key="1">
    <citation type="journal article" date="1991" name="J. Virol.">
        <title>Evolutionary analysis of the influenza A virus M gene with comparison of the M1 and M2 proteins.</title>
        <authorList>
            <person name="Ito T."/>
            <person name="Gorman O.T."/>
            <person name="Kawaoka Y."/>
            <person name="Bean W.J."/>
            <person name="Webster R.G."/>
        </authorList>
    </citation>
    <scope>NUCLEOTIDE SEQUENCE [GENOMIC RNA]</scope>
</reference>
<comment type="function">
    <text evidence="1">Forms a proton-selective ion channel that is necessary for the efficient release of the viral genome during virus entry. After attaching to the cell surface, the virion enters the cell by endocytosis. Acidification of the endosome triggers M2 ion channel activity. The influx of protons into virion interior is believed to disrupt interactions between the viral ribonucleoprotein (RNP), matrix protein 1 (M1), and lipid bilayers, thereby freeing the viral genome from interaction with viral proteins and enabling RNA segments to migrate to the host cell nucleus, where influenza virus RNA transcription and replication occur. Also plays a role in viral proteins secretory pathway. Elevates the intravesicular pH of normally acidic compartments, such as trans-Golgi network, preventing newly formed hemagglutinin from premature switching to the fusion-active conformation.</text>
</comment>
<comment type="activity regulation">
    <text>The M2 protein from most influenza A strains is inhibited by amantadine and rimantadine, resulting in viral uncoating incapacity. Emergence of amantadine-resistant variants is usually rapid.</text>
</comment>
<comment type="subunit">
    <text evidence="1">Homotetramer; composed of two disulfide-linked dimers held together by non-covalent interactions. May interact with matrix protein 1.</text>
</comment>
<comment type="subcellular location">
    <subcellularLocation>
        <location evidence="1">Virion membrane</location>
    </subcellularLocation>
    <subcellularLocation>
        <location evidence="1">Host apical cell membrane</location>
        <topology evidence="1">Single-pass type III membrane protein</topology>
    </subcellularLocation>
    <text evidence="1">Abundantly expressed at the apical plasma membrane in infected polarized epithelial cells, in close proximity to budding and assembled virions. Minor component of virions (only 16-20 molecules/virion).</text>
</comment>
<comment type="alternative products">
    <event type="alternative splicing"/>
    <isoform>
        <id>Q67211-1</id>
        <name>M2</name>
        <sequence type="displayed"/>
    </isoform>
    <isoform>
        <id>Q76V07-1</id>
        <name>M1</name>
        <sequence type="external"/>
    </isoform>
    <text>Only the first 9 residues are shared by the 2 isoforms.</text>
</comment>
<comment type="domain">
    <text evidence="1">Cytoplasmic tail plays an important role in virion assembly and morphogenesis.</text>
</comment>
<comment type="miscellaneous">
    <text evidence="1">When the channel is activated, one or more imidazole moieties of His-37 probably become bi-protonated.</text>
</comment>
<comment type="similarity">
    <text evidence="1">Belongs to the influenza viruses matrix protein M2 family.</text>
</comment>
<protein>
    <recommendedName>
        <fullName evidence="1">Matrix protein 2</fullName>
    </recommendedName>
    <alternativeName>
        <fullName evidence="1">Proton channel protein M2</fullName>
    </alternativeName>
</protein>
<gene>
    <name evidence="1" type="primary">M</name>
</gene>
<accession>Q67211</accession>
<sequence>MSLLTEVETPIRNEWGCKCNDSSDPLVAAASIIGILHLILWILDRLFLKCIYRRFKYGLKRGPSTEGVPESMREEYRQKQQSAVDVDDGHFVNIVLE</sequence>
<dbReference type="EMBL" id="M63521">
    <property type="protein sequence ID" value="AAA43350.1"/>
    <property type="molecule type" value="Genomic_RNA"/>
</dbReference>
<dbReference type="SMR" id="Q67211"/>
<dbReference type="GlyCosmos" id="Q67211">
    <property type="glycosylation" value="1 site, No reported glycans"/>
</dbReference>
<dbReference type="GO" id="GO:0020002">
    <property type="term" value="C:host cell plasma membrane"/>
    <property type="evidence" value="ECO:0007669"/>
    <property type="project" value="UniProtKB-SubCell"/>
</dbReference>
<dbReference type="GO" id="GO:0016020">
    <property type="term" value="C:membrane"/>
    <property type="evidence" value="ECO:0007669"/>
    <property type="project" value="UniProtKB-UniRule"/>
</dbReference>
<dbReference type="GO" id="GO:0055036">
    <property type="term" value="C:virion membrane"/>
    <property type="evidence" value="ECO:0007669"/>
    <property type="project" value="UniProtKB-SubCell"/>
</dbReference>
<dbReference type="GO" id="GO:0005216">
    <property type="term" value="F:monoatomic ion channel activity"/>
    <property type="evidence" value="ECO:0007669"/>
    <property type="project" value="UniProtKB-UniRule"/>
</dbReference>
<dbReference type="GO" id="GO:0015078">
    <property type="term" value="F:proton transmembrane transporter activity"/>
    <property type="evidence" value="ECO:0007669"/>
    <property type="project" value="UniProtKB-UniRule"/>
</dbReference>
<dbReference type="GO" id="GO:0051259">
    <property type="term" value="P:protein complex oligomerization"/>
    <property type="evidence" value="ECO:0007669"/>
    <property type="project" value="UniProtKB-UniRule"/>
</dbReference>
<dbReference type="GO" id="GO:0044694">
    <property type="term" value="P:symbiont genome entry into host cell via pore formation in plasma membrane"/>
    <property type="evidence" value="ECO:0007669"/>
    <property type="project" value="UniProtKB-UniRule"/>
</dbReference>
<dbReference type="GO" id="GO:0140321">
    <property type="term" value="P:symbiont-mediated suppression of host autophagy"/>
    <property type="evidence" value="ECO:0007669"/>
    <property type="project" value="UniProtKB-KW"/>
</dbReference>
<dbReference type="Gene3D" id="6.10.250.1640">
    <property type="match status" value="1"/>
</dbReference>
<dbReference type="HAMAP" id="MF_04069">
    <property type="entry name" value="INFV_M2"/>
    <property type="match status" value="1"/>
</dbReference>
<dbReference type="InterPro" id="IPR002089">
    <property type="entry name" value="Flu_M2"/>
</dbReference>
<dbReference type="Pfam" id="PF00599">
    <property type="entry name" value="Flu_M2"/>
    <property type="match status" value="1"/>
</dbReference>
<organism>
    <name type="scientific">Influenza A virus (strain A/Wisconsin/3523/1988 H1N1)</name>
    <dbReference type="NCBI Taxonomy" id="380346"/>
    <lineage>
        <taxon>Viruses</taxon>
        <taxon>Riboviria</taxon>
        <taxon>Orthornavirae</taxon>
        <taxon>Negarnaviricota</taxon>
        <taxon>Polyploviricotina</taxon>
        <taxon>Insthoviricetes</taxon>
        <taxon>Articulavirales</taxon>
        <taxon>Orthomyxoviridae</taxon>
        <taxon>Alphainfluenzavirus</taxon>
        <taxon>Alphainfluenzavirus influenzae</taxon>
        <taxon>Influenza A virus</taxon>
    </lineage>
</organism>